<keyword id="KW-0378">Hydrolase</keyword>
<keyword id="KW-0479">Metal-binding</keyword>
<keyword id="KW-0482">Metalloprotease</keyword>
<keyword id="KW-0645">Protease</keyword>
<keyword id="KW-0862">Zinc</keyword>
<dbReference type="EMBL" id="CP001050">
    <property type="protein sequence ID" value="ACF29902.1"/>
    <property type="molecule type" value="Genomic_DNA"/>
</dbReference>
<dbReference type="SMR" id="B4RM65"/>
<dbReference type="KEGG" id="ngk:NGK_1225"/>
<dbReference type="HOGENOM" id="CLU_073529_0_1_4"/>
<dbReference type="Proteomes" id="UP000002564">
    <property type="component" value="Chromosome"/>
</dbReference>
<dbReference type="GO" id="GO:0046872">
    <property type="term" value="F:metal ion binding"/>
    <property type="evidence" value="ECO:0007669"/>
    <property type="project" value="UniProtKB-KW"/>
</dbReference>
<dbReference type="GO" id="GO:0008237">
    <property type="term" value="F:metallopeptidase activity"/>
    <property type="evidence" value="ECO:0007669"/>
    <property type="project" value="UniProtKB-KW"/>
</dbReference>
<dbReference type="GO" id="GO:0006508">
    <property type="term" value="P:proteolysis"/>
    <property type="evidence" value="ECO:0007669"/>
    <property type="project" value="UniProtKB-KW"/>
</dbReference>
<dbReference type="CDD" id="cd08071">
    <property type="entry name" value="MPN_DUF2466"/>
    <property type="match status" value="1"/>
</dbReference>
<dbReference type="Gene3D" id="3.40.140.10">
    <property type="entry name" value="Cytidine Deaminase, domain 2"/>
    <property type="match status" value="1"/>
</dbReference>
<dbReference type="InterPro" id="IPR037518">
    <property type="entry name" value="MPN"/>
</dbReference>
<dbReference type="InterPro" id="IPR025657">
    <property type="entry name" value="RadC_JAB"/>
</dbReference>
<dbReference type="InterPro" id="IPR010994">
    <property type="entry name" value="RuvA_2-like"/>
</dbReference>
<dbReference type="InterPro" id="IPR001405">
    <property type="entry name" value="UPF0758"/>
</dbReference>
<dbReference type="InterPro" id="IPR046778">
    <property type="entry name" value="UPF0758_N"/>
</dbReference>
<dbReference type="NCBIfam" id="NF000642">
    <property type="entry name" value="PRK00024.1"/>
    <property type="match status" value="1"/>
</dbReference>
<dbReference type="NCBIfam" id="TIGR00608">
    <property type="entry name" value="radc"/>
    <property type="match status" value="1"/>
</dbReference>
<dbReference type="PANTHER" id="PTHR30471">
    <property type="entry name" value="DNA REPAIR PROTEIN RADC"/>
    <property type="match status" value="1"/>
</dbReference>
<dbReference type="PANTHER" id="PTHR30471:SF3">
    <property type="entry name" value="UPF0758 PROTEIN YEES-RELATED"/>
    <property type="match status" value="1"/>
</dbReference>
<dbReference type="Pfam" id="PF04002">
    <property type="entry name" value="RadC"/>
    <property type="match status" value="1"/>
</dbReference>
<dbReference type="Pfam" id="PF20582">
    <property type="entry name" value="UPF0758_N"/>
    <property type="match status" value="1"/>
</dbReference>
<dbReference type="SUPFAM" id="SSF102712">
    <property type="entry name" value="JAB1/MPN domain"/>
    <property type="match status" value="1"/>
</dbReference>
<dbReference type="SUPFAM" id="SSF47781">
    <property type="entry name" value="RuvA domain 2-like"/>
    <property type="match status" value="1"/>
</dbReference>
<dbReference type="PROSITE" id="PS50249">
    <property type="entry name" value="MPN"/>
    <property type="match status" value="1"/>
</dbReference>
<protein>
    <recommendedName>
        <fullName>UPF0758 protein NGK_1225</fullName>
    </recommendedName>
</protein>
<accession>B4RM65</accession>
<reference key="1">
    <citation type="journal article" date="2008" name="J. Bacteriol.">
        <title>Complete genome sequence of Neisseria gonorrhoeae NCCP11945.</title>
        <authorList>
            <person name="Chung G.T."/>
            <person name="Yoo J.S."/>
            <person name="Oh H.B."/>
            <person name="Lee Y.S."/>
            <person name="Cha S.H."/>
            <person name="Kim S.J."/>
            <person name="Yoo C.K."/>
        </authorList>
    </citation>
    <scope>NUCLEOTIDE SEQUENCE [LARGE SCALE GENOMIC DNA]</scope>
    <source>
        <strain>NCCP11945</strain>
    </source>
</reference>
<comment type="similarity">
    <text evidence="2">Belongs to the UPF0758 family.</text>
</comment>
<gene>
    <name type="ordered locus">NGK_1225</name>
</gene>
<sequence length="225" mass="25109">MSIKQWPEGERPREKLLERGAAALSDAELLAILLRVGTRGMSAVDLARYLLQEFGSLGRLMSAEVGKLSAYKGMGTASFTQFAVVREIGRRILEEELQEEITLSDPDTVADYLRFHLGQEKVEVSVALLLNRQNQLIAVRELSRGTVAENTIYIREIVKLALDEYADSLIIAHNHPGGSPEPSQEDIMFTRRLAQAMSLVDVSLLDHFIVTSQTVRSFRQLGLMP</sequence>
<name>Y1225_NEIG2</name>
<organism>
    <name type="scientific">Neisseria gonorrhoeae (strain NCCP11945)</name>
    <dbReference type="NCBI Taxonomy" id="521006"/>
    <lineage>
        <taxon>Bacteria</taxon>
        <taxon>Pseudomonadati</taxon>
        <taxon>Pseudomonadota</taxon>
        <taxon>Betaproteobacteria</taxon>
        <taxon>Neisseriales</taxon>
        <taxon>Neisseriaceae</taxon>
        <taxon>Neisseria</taxon>
    </lineage>
</organism>
<proteinExistence type="inferred from homology"/>
<feature type="chain" id="PRO_1000089826" description="UPF0758 protein NGK_1225">
    <location>
        <begin position="1"/>
        <end position="225"/>
    </location>
</feature>
<feature type="domain" description="MPN" evidence="1">
    <location>
        <begin position="102"/>
        <end position="224"/>
    </location>
</feature>
<feature type="short sequence motif" description="JAMM motif" evidence="1">
    <location>
        <begin position="173"/>
        <end position="186"/>
    </location>
</feature>
<feature type="binding site" evidence="1">
    <location>
        <position position="173"/>
    </location>
    <ligand>
        <name>Zn(2+)</name>
        <dbReference type="ChEBI" id="CHEBI:29105"/>
        <note>catalytic</note>
    </ligand>
</feature>
<feature type="binding site" evidence="1">
    <location>
        <position position="175"/>
    </location>
    <ligand>
        <name>Zn(2+)</name>
        <dbReference type="ChEBI" id="CHEBI:29105"/>
        <note>catalytic</note>
    </ligand>
</feature>
<feature type="binding site" evidence="1">
    <location>
        <position position="186"/>
    </location>
    <ligand>
        <name>Zn(2+)</name>
        <dbReference type="ChEBI" id="CHEBI:29105"/>
        <note>catalytic</note>
    </ligand>
</feature>
<evidence type="ECO:0000255" key="1">
    <source>
        <dbReference type="PROSITE-ProRule" id="PRU01182"/>
    </source>
</evidence>
<evidence type="ECO:0000305" key="2"/>